<evidence type="ECO:0000250" key="1"/>
<evidence type="ECO:0000269" key="2">
    <source>
    </source>
</evidence>
<evidence type="ECO:0000305" key="3"/>
<keyword id="KW-0256">Endoplasmic reticulum</keyword>
<keyword id="KW-0539">Nucleus</keyword>
<keyword id="KW-0653">Protein transport</keyword>
<keyword id="KW-1185">Reference proteome</keyword>
<keyword id="KW-0813">Transport</keyword>
<name>BCP1_SCHPO</name>
<reference key="1">
    <citation type="journal article" date="2002" name="Nature">
        <title>The genome sequence of Schizosaccharomyces pombe.</title>
        <authorList>
            <person name="Wood V."/>
            <person name="Gwilliam R."/>
            <person name="Rajandream M.A."/>
            <person name="Lyne M.H."/>
            <person name="Lyne R."/>
            <person name="Stewart A."/>
            <person name="Sgouros J.G."/>
            <person name="Peat N."/>
            <person name="Hayles J."/>
            <person name="Baker S.G."/>
            <person name="Basham D."/>
            <person name="Bowman S."/>
            <person name="Brooks K."/>
            <person name="Brown D."/>
            <person name="Brown S."/>
            <person name="Chillingworth T."/>
            <person name="Churcher C.M."/>
            <person name="Collins M."/>
            <person name="Connor R."/>
            <person name="Cronin A."/>
            <person name="Davis P."/>
            <person name="Feltwell T."/>
            <person name="Fraser A."/>
            <person name="Gentles S."/>
            <person name="Goble A."/>
            <person name="Hamlin N."/>
            <person name="Harris D.E."/>
            <person name="Hidalgo J."/>
            <person name="Hodgson G."/>
            <person name="Holroyd S."/>
            <person name="Hornsby T."/>
            <person name="Howarth S."/>
            <person name="Huckle E.J."/>
            <person name="Hunt S."/>
            <person name="Jagels K."/>
            <person name="James K.D."/>
            <person name="Jones L."/>
            <person name="Jones M."/>
            <person name="Leather S."/>
            <person name="McDonald S."/>
            <person name="McLean J."/>
            <person name="Mooney P."/>
            <person name="Moule S."/>
            <person name="Mungall K.L."/>
            <person name="Murphy L.D."/>
            <person name="Niblett D."/>
            <person name="Odell C."/>
            <person name="Oliver K."/>
            <person name="O'Neil S."/>
            <person name="Pearson D."/>
            <person name="Quail M.A."/>
            <person name="Rabbinowitsch E."/>
            <person name="Rutherford K.M."/>
            <person name="Rutter S."/>
            <person name="Saunders D."/>
            <person name="Seeger K."/>
            <person name="Sharp S."/>
            <person name="Skelton J."/>
            <person name="Simmonds M.N."/>
            <person name="Squares R."/>
            <person name="Squares S."/>
            <person name="Stevens K."/>
            <person name="Taylor K."/>
            <person name="Taylor R.G."/>
            <person name="Tivey A."/>
            <person name="Walsh S.V."/>
            <person name="Warren T."/>
            <person name="Whitehead S."/>
            <person name="Woodward J.R."/>
            <person name="Volckaert G."/>
            <person name="Aert R."/>
            <person name="Robben J."/>
            <person name="Grymonprez B."/>
            <person name="Weltjens I."/>
            <person name="Vanstreels E."/>
            <person name="Rieger M."/>
            <person name="Schaefer M."/>
            <person name="Mueller-Auer S."/>
            <person name="Gabel C."/>
            <person name="Fuchs M."/>
            <person name="Duesterhoeft A."/>
            <person name="Fritzc C."/>
            <person name="Holzer E."/>
            <person name="Moestl D."/>
            <person name="Hilbert H."/>
            <person name="Borzym K."/>
            <person name="Langer I."/>
            <person name="Beck A."/>
            <person name="Lehrach H."/>
            <person name="Reinhardt R."/>
            <person name="Pohl T.M."/>
            <person name="Eger P."/>
            <person name="Zimmermann W."/>
            <person name="Wedler H."/>
            <person name="Wambutt R."/>
            <person name="Purnelle B."/>
            <person name="Goffeau A."/>
            <person name="Cadieu E."/>
            <person name="Dreano S."/>
            <person name="Gloux S."/>
            <person name="Lelaure V."/>
            <person name="Mottier S."/>
            <person name="Galibert F."/>
            <person name="Aves S.J."/>
            <person name="Xiang Z."/>
            <person name="Hunt C."/>
            <person name="Moore K."/>
            <person name="Hurst S.M."/>
            <person name="Lucas M."/>
            <person name="Rochet M."/>
            <person name="Gaillardin C."/>
            <person name="Tallada V.A."/>
            <person name="Garzon A."/>
            <person name="Thode G."/>
            <person name="Daga R.R."/>
            <person name="Cruzado L."/>
            <person name="Jimenez J."/>
            <person name="Sanchez M."/>
            <person name="del Rey F."/>
            <person name="Benito J."/>
            <person name="Dominguez A."/>
            <person name="Revuelta J.L."/>
            <person name="Moreno S."/>
            <person name="Armstrong J."/>
            <person name="Forsburg S.L."/>
            <person name="Cerutti L."/>
            <person name="Lowe T."/>
            <person name="McCombie W.R."/>
            <person name="Paulsen I."/>
            <person name="Potashkin J."/>
            <person name="Shpakovski G.V."/>
            <person name="Ussery D."/>
            <person name="Barrell B.G."/>
            <person name="Nurse P."/>
        </authorList>
    </citation>
    <scope>NUCLEOTIDE SEQUENCE [LARGE SCALE GENOMIC DNA]</scope>
    <source>
        <strain>972 / ATCC 24843</strain>
    </source>
</reference>
<reference key="2">
    <citation type="journal article" date="2011" name="Science">
        <title>Comparative functional genomics of the fission yeasts.</title>
        <authorList>
            <person name="Rhind N."/>
            <person name="Chen Z."/>
            <person name="Yassour M."/>
            <person name="Thompson D.A."/>
            <person name="Haas B.J."/>
            <person name="Habib N."/>
            <person name="Wapinski I."/>
            <person name="Roy S."/>
            <person name="Lin M.F."/>
            <person name="Heiman D.I."/>
            <person name="Young S.K."/>
            <person name="Furuya K."/>
            <person name="Guo Y."/>
            <person name="Pidoux A."/>
            <person name="Chen H.M."/>
            <person name="Robbertse B."/>
            <person name="Goldberg J.M."/>
            <person name="Aoki K."/>
            <person name="Bayne E.H."/>
            <person name="Berlin A.M."/>
            <person name="Desjardins C.A."/>
            <person name="Dobbs E."/>
            <person name="Dukaj L."/>
            <person name="Fan L."/>
            <person name="FitzGerald M.G."/>
            <person name="French C."/>
            <person name="Gujja S."/>
            <person name="Hansen K."/>
            <person name="Keifenheim D."/>
            <person name="Levin J.Z."/>
            <person name="Mosher R.A."/>
            <person name="Mueller C.A."/>
            <person name="Pfiffner J."/>
            <person name="Priest M."/>
            <person name="Russ C."/>
            <person name="Smialowska A."/>
            <person name="Swoboda P."/>
            <person name="Sykes S.M."/>
            <person name="Vaughn M."/>
            <person name="Vengrova S."/>
            <person name="Yoder R."/>
            <person name="Zeng Q."/>
            <person name="Allshire R."/>
            <person name="Baulcombe D."/>
            <person name="Birren B.W."/>
            <person name="Brown W."/>
            <person name="Ekwall K."/>
            <person name="Kellis M."/>
            <person name="Leatherwood J."/>
            <person name="Levin H."/>
            <person name="Margalit H."/>
            <person name="Martienssen R."/>
            <person name="Nieduszynski C.A."/>
            <person name="Spatafora J.W."/>
            <person name="Friedman N."/>
            <person name="Dalgaard J.Z."/>
            <person name="Baumann P."/>
            <person name="Niki H."/>
            <person name="Regev A."/>
            <person name="Nusbaum C."/>
        </authorList>
    </citation>
    <scope>REVISION OF GENE MODEL</scope>
</reference>
<reference key="3">
    <citation type="journal article" date="2006" name="Nat. Biotechnol.">
        <title>ORFeome cloning and global analysis of protein localization in the fission yeast Schizosaccharomyces pombe.</title>
        <authorList>
            <person name="Matsuyama A."/>
            <person name="Arai R."/>
            <person name="Yashiroda Y."/>
            <person name="Shirai A."/>
            <person name="Kamata A."/>
            <person name="Sekido S."/>
            <person name="Kobayashi Y."/>
            <person name="Hashimoto A."/>
            <person name="Hamamoto M."/>
            <person name="Hiraoka Y."/>
            <person name="Horinouchi S."/>
            <person name="Yoshida M."/>
        </authorList>
    </citation>
    <scope>SUBCELLULAR LOCATION [LARGE SCALE ANALYSIS]</scope>
</reference>
<gene>
    <name type="primary">bcp1</name>
    <name type="ORF">SPCC613.08</name>
</gene>
<dbReference type="EMBL" id="CU329672">
    <property type="protein sequence ID" value="CAA21060.2"/>
    <property type="molecule type" value="Genomic_DNA"/>
</dbReference>
<dbReference type="PIR" id="T41474">
    <property type="entry name" value="T41474"/>
</dbReference>
<dbReference type="RefSeq" id="NP_587696.2">
    <property type="nucleotide sequence ID" value="NM_001022691.2"/>
</dbReference>
<dbReference type="SMR" id="O74907"/>
<dbReference type="BioGRID" id="275287">
    <property type="interactions" value="1"/>
</dbReference>
<dbReference type="FunCoup" id="O74907">
    <property type="interactions" value="898"/>
</dbReference>
<dbReference type="STRING" id="284812.O74907"/>
<dbReference type="iPTMnet" id="O74907"/>
<dbReference type="PaxDb" id="4896-SPCC613.08.1"/>
<dbReference type="EnsemblFungi" id="SPCC613.08.1">
    <property type="protein sequence ID" value="SPCC613.08.1:pep"/>
    <property type="gene ID" value="SPCC613.08"/>
</dbReference>
<dbReference type="KEGG" id="spo:2538703"/>
<dbReference type="PomBase" id="SPCC613.08"/>
<dbReference type="VEuPathDB" id="FungiDB:SPCC613.08"/>
<dbReference type="eggNOG" id="KOG3034">
    <property type="taxonomic scope" value="Eukaryota"/>
</dbReference>
<dbReference type="HOGENOM" id="CLU_068770_2_0_1"/>
<dbReference type="InParanoid" id="O74907"/>
<dbReference type="OMA" id="VKFYRKE"/>
<dbReference type="PRO" id="PR:O74907"/>
<dbReference type="Proteomes" id="UP000002485">
    <property type="component" value="Chromosome III"/>
</dbReference>
<dbReference type="GO" id="GO:0005737">
    <property type="term" value="C:cytoplasm"/>
    <property type="evidence" value="ECO:0000266"/>
    <property type="project" value="PomBase"/>
</dbReference>
<dbReference type="GO" id="GO:0005783">
    <property type="term" value="C:endoplasmic reticulum"/>
    <property type="evidence" value="ECO:0007669"/>
    <property type="project" value="UniProtKB-SubCell"/>
</dbReference>
<dbReference type="GO" id="GO:0005635">
    <property type="term" value="C:nuclear envelope"/>
    <property type="evidence" value="ECO:0007005"/>
    <property type="project" value="PomBase"/>
</dbReference>
<dbReference type="GO" id="GO:0005634">
    <property type="term" value="C:nucleus"/>
    <property type="evidence" value="ECO:0007005"/>
    <property type="project" value="PomBase"/>
</dbReference>
<dbReference type="GO" id="GO:0006611">
    <property type="term" value="P:protein export from nucleus"/>
    <property type="evidence" value="ECO:0000266"/>
    <property type="project" value="PomBase"/>
</dbReference>
<dbReference type="GO" id="GO:0000055">
    <property type="term" value="P:ribosomal large subunit export from nucleus"/>
    <property type="evidence" value="ECO:0000266"/>
    <property type="project" value="PomBase"/>
</dbReference>
<dbReference type="InterPro" id="IPR025602">
    <property type="entry name" value="BCP1_family"/>
</dbReference>
<dbReference type="PANTHER" id="PTHR13261">
    <property type="entry name" value="BRCA2 AND CDKN1A INTERACTING PROTEIN"/>
    <property type="match status" value="1"/>
</dbReference>
<dbReference type="PANTHER" id="PTHR13261:SF0">
    <property type="entry name" value="BRCA2 AND CDKN1A-INTERACTING PROTEIN"/>
    <property type="match status" value="1"/>
</dbReference>
<dbReference type="Pfam" id="PF13862">
    <property type="entry name" value="BCCIP"/>
    <property type="match status" value="1"/>
</dbReference>
<dbReference type="PIRSF" id="PIRSF028983">
    <property type="entry name" value="BCP1"/>
    <property type="match status" value="1"/>
</dbReference>
<comment type="function">
    <text evidence="1">Involved in nuclear export, actin cytoskeleton organization and vesicular transport.</text>
</comment>
<comment type="subcellular location">
    <subcellularLocation>
        <location evidence="2">Endoplasmic reticulum</location>
    </subcellularLocation>
    <subcellularLocation>
        <location evidence="2">Nucleus envelope</location>
    </subcellularLocation>
</comment>
<comment type="similarity">
    <text evidence="3">Belongs to the BCP1 family.</text>
</comment>
<accession>O74907</accession>
<proteinExistence type="inferred from homology"/>
<sequence length="282" mass="32369">MAKRHAEENEDTVMSESLKVVDTDFINVDFEFFDPQPIDFHAFKNLLKQLLGYDHTNVNLSALADLILSQPLLGSTVKVDGNNSDPYAMLSVINLNTRRDEPVIKQLTSYIISRLAKSNSRLENELQKLLEPNSGSQVGLIVNERLINMPVQVIPPMYNMLLEEMQWAINENEPYNFTHYLLLSRTYTEIESKLMDDERPSKKGKKSKKTSGEEVMFFHPEDEQFREVAIDIADYPFANQDFNPDANRVFQDAGIKPQGELLLMTNEDFKNLVPKLMEIYSA</sequence>
<organism>
    <name type="scientific">Schizosaccharomyces pombe (strain 972 / ATCC 24843)</name>
    <name type="common">Fission yeast</name>
    <dbReference type="NCBI Taxonomy" id="284812"/>
    <lineage>
        <taxon>Eukaryota</taxon>
        <taxon>Fungi</taxon>
        <taxon>Dikarya</taxon>
        <taxon>Ascomycota</taxon>
        <taxon>Taphrinomycotina</taxon>
        <taxon>Schizosaccharomycetes</taxon>
        <taxon>Schizosaccharomycetales</taxon>
        <taxon>Schizosaccharomycetaceae</taxon>
        <taxon>Schizosaccharomyces</taxon>
    </lineage>
</organism>
<feature type="chain" id="PRO_0000249705" description="Protein bcp1">
    <location>
        <begin position="1"/>
        <end position="282"/>
    </location>
</feature>
<protein>
    <recommendedName>
        <fullName>Protein bcp1</fullName>
    </recommendedName>
</protein>